<dbReference type="EMBL" id="AB065774">
    <property type="protein sequence ID" value="BAC05994.1"/>
    <property type="molecule type" value="Genomic_DNA"/>
</dbReference>
<dbReference type="EMBL" id="BC140727">
    <property type="protein sequence ID" value="AAI40728.1"/>
    <property type="molecule type" value="mRNA"/>
</dbReference>
<dbReference type="EMBL" id="BK004503">
    <property type="protein sequence ID" value="DAA04901.1"/>
    <property type="molecule type" value="Genomic_DNA"/>
</dbReference>
<dbReference type="CCDS" id="CCDS31503.1"/>
<dbReference type="RefSeq" id="NP_001004700.2">
    <property type="nucleotide sequence ID" value="NM_001004700.3"/>
</dbReference>
<dbReference type="SMR" id="Q6IEV9"/>
<dbReference type="FunCoup" id="Q6IEV9">
    <property type="interactions" value="417"/>
</dbReference>
<dbReference type="STRING" id="9606.ENSP00000492971"/>
<dbReference type="GlyCosmos" id="Q6IEV9">
    <property type="glycosylation" value="1 site, No reported glycans"/>
</dbReference>
<dbReference type="GlyGen" id="Q6IEV9">
    <property type="glycosylation" value="1 site"/>
</dbReference>
<dbReference type="iPTMnet" id="Q6IEV9"/>
<dbReference type="PhosphoSitePlus" id="Q6IEV9"/>
<dbReference type="BioMuta" id="OR4C11"/>
<dbReference type="DMDM" id="74762306"/>
<dbReference type="PaxDb" id="9606-ENSP00000306651"/>
<dbReference type="PeptideAtlas" id="Q6IEV9"/>
<dbReference type="Antibodypedia" id="27133">
    <property type="antibodies" value="21 antibodies from 11 providers"/>
</dbReference>
<dbReference type="DNASU" id="219429"/>
<dbReference type="Ensembl" id="ENST00000641580.1">
    <property type="protein sequence ID" value="ENSP00000492971.1"/>
    <property type="gene ID" value="ENSG00000172188.6"/>
</dbReference>
<dbReference type="GeneID" id="219429"/>
<dbReference type="KEGG" id="hsa:219429"/>
<dbReference type="MANE-Select" id="ENST00000641580.1">
    <property type="protein sequence ID" value="ENSP00000492971.1"/>
    <property type="RefSeq nucleotide sequence ID" value="NM_001004700.3"/>
    <property type="RefSeq protein sequence ID" value="NP_001004700.2"/>
</dbReference>
<dbReference type="UCSC" id="uc010rii.2">
    <property type="organism name" value="human"/>
</dbReference>
<dbReference type="AGR" id="HGNC:15167"/>
<dbReference type="CTD" id="219429"/>
<dbReference type="DisGeNET" id="219429"/>
<dbReference type="GeneCards" id="OR4C11"/>
<dbReference type="HGNC" id="HGNC:15167">
    <property type="gene designation" value="OR4C11"/>
</dbReference>
<dbReference type="HPA" id="ENSG00000172188">
    <property type="expression patterns" value="Not detected"/>
</dbReference>
<dbReference type="neXtProt" id="NX_Q6IEV9"/>
<dbReference type="PharmGKB" id="PA32253"/>
<dbReference type="VEuPathDB" id="HostDB:ENSG00000172188"/>
<dbReference type="eggNOG" id="ENOG502SHD5">
    <property type="taxonomic scope" value="Eukaryota"/>
</dbReference>
<dbReference type="GeneTree" id="ENSGT00940000156137"/>
<dbReference type="HOGENOM" id="CLU_012526_8_1_1"/>
<dbReference type="InParanoid" id="Q6IEV9"/>
<dbReference type="OMA" id="WHIKITA"/>
<dbReference type="OrthoDB" id="10017003at2759"/>
<dbReference type="PAN-GO" id="Q6IEV9">
    <property type="GO annotations" value="2 GO annotations based on evolutionary models"/>
</dbReference>
<dbReference type="PhylomeDB" id="Q6IEV9"/>
<dbReference type="TreeFam" id="TF352732"/>
<dbReference type="PathwayCommons" id="Q6IEV9"/>
<dbReference type="Reactome" id="R-HSA-9752946">
    <property type="pathway name" value="Expression and translocation of olfactory receptors"/>
</dbReference>
<dbReference type="BioGRID-ORCS" id="219429">
    <property type="hits" value="11 hits in 745 CRISPR screens"/>
</dbReference>
<dbReference type="GeneWiki" id="OR4C11"/>
<dbReference type="GenomeRNAi" id="219429"/>
<dbReference type="Pharos" id="Q6IEV9">
    <property type="development level" value="Tdark"/>
</dbReference>
<dbReference type="PRO" id="PR:Q6IEV9"/>
<dbReference type="Proteomes" id="UP000005640">
    <property type="component" value="Chromosome 11"/>
</dbReference>
<dbReference type="RNAct" id="Q6IEV9">
    <property type="molecule type" value="protein"/>
</dbReference>
<dbReference type="ExpressionAtlas" id="Q6IEV9">
    <property type="expression patterns" value="differential"/>
</dbReference>
<dbReference type="GO" id="GO:0005886">
    <property type="term" value="C:plasma membrane"/>
    <property type="evidence" value="ECO:0000318"/>
    <property type="project" value="GO_Central"/>
</dbReference>
<dbReference type="GO" id="GO:0004930">
    <property type="term" value="F:G protein-coupled receptor activity"/>
    <property type="evidence" value="ECO:0007669"/>
    <property type="project" value="UniProtKB-KW"/>
</dbReference>
<dbReference type="GO" id="GO:0004984">
    <property type="term" value="F:olfactory receptor activity"/>
    <property type="evidence" value="ECO:0000318"/>
    <property type="project" value="GO_Central"/>
</dbReference>
<dbReference type="CDD" id="cd15939">
    <property type="entry name" value="7tmA_OR4A-like"/>
    <property type="match status" value="1"/>
</dbReference>
<dbReference type="FunFam" id="1.20.1070.10:FF:000007">
    <property type="entry name" value="Olfactory receptor"/>
    <property type="match status" value="1"/>
</dbReference>
<dbReference type="Gene3D" id="1.20.1070.10">
    <property type="entry name" value="Rhodopsin 7-helix transmembrane proteins"/>
    <property type="match status" value="1"/>
</dbReference>
<dbReference type="InterPro" id="IPR000276">
    <property type="entry name" value="GPCR_Rhodpsn"/>
</dbReference>
<dbReference type="InterPro" id="IPR017452">
    <property type="entry name" value="GPCR_Rhodpsn_7TM"/>
</dbReference>
<dbReference type="InterPro" id="IPR000725">
    <property type="entry name" value="Olfact_rcpt"/>
</dbReference>
<dbReference type="InterPro" id="IPR050427">
    <property type="entry name" value="Olfactory_Receptors"/>
</dbReference>
<dbReference type="PANTHER" id="PTHR48002">
    <property type="entry name" value="OLFACTORY RECEPTOR"/>
    <property type="match status" value="1"/>
</dbReference>
<dbReference type="Pfam" id="PF13853">
    <property type="entry name" value="7tm_4"/>
    <property type="match status" value="1"/>
</dbReference>
<dbReference type="PRINTS" id="PR00237">
    <property type="entry name" value="GPCRRHODOPSN"/>
</dbReference>
<dbReference type="PRINTS" id="PR00245">
    <property type="entry name" value="OLFACTORYR"/>
</dbReference>
<dbReference type="SUPFAM" id="SSF81321">
    <property type="entry name" value="Family A G protein-coupled receptor-like"/>
    <property type="match status" value="1"/>
</dbReference>
<dbReference type="PROSITE" id="PS00237">
    <property type="entry name" value="G_PROTEIN_RECEP_F1_1"/>
    <property type="match status" value="1"/>
</dbReference>
<dbReference type="PROSITE" id="PS50262">
    <property type="entry name" value="G_PROTEIN_RECEP_F1_2"/>
    <property type="match status" value="1"/>
</dbReference>
<keyword id="KW-1003">Cell membrane</keyword>
<keyword id="KW-1015">Disulfide bond</keyword>
<keyword id="KW-0297">G-protein coupled receptor</keyword>
<keyword id="KW-0325">Glycoprotein</keyword>
<keyword id="KW-0472">Membrane</keyword>
<keyword id="KW-0552">Olfaction</keyword>
<keyword id="KW-0675">Receptor</keyword>
<keyword id="KW-1185">Reference proteome</keyword>
<keyword id="KW-0716">Sensory transduction</keyword>
<keyword id="KW-0807">Transducer</keyword>
<keyword id="KW-0812">Transmembrane</keyword>
<keyword id="KW-1133">Transmembrane helix</keyword>
<feature type="chain" id="PRO_0000150532" description="Olfactory receptor 4C11">
    <location>
        <begin position="1"/>
        <end position="310"/>
    </location>
</feature>
<feature type="topological domain" description="Extracellular" evidence="1">
    <location>
        <begin position="1"/>
        <end position="23"/>
    </location>
</feature>
<feature type="transmembrane region" description="Helical; Name=1" evidence="1">
    <location>
        <begin position="24"/>
        <end position="47"/>
    </location>
</feature>
<feature type="topological domain" description="Cytoplasmic" evidence="1">
    <location>
        <begin position="48"/>
        <end position="55"/>
    </location>
</feature>
<feature type="transmembrane region" description="Helical; Name=2" evidence="1">
    <location>
        <begin position="56"/>
        <end position="77"/>
    </location>
</feature>
<feature type="topological domain" description="Extracellular" evidence="1">
    <location>
        <begin position="78"/>
        <end position="98"/>
    </location>
</feature>
<feature type="transmembrane region" description="Helical; Name=3" evidence="1">
    <location>
        <begin position="99"/>
        <end position="118"/>
    </location>
</feature>
<feature type="topological domain" description="Cytoplasmic" evidence="1">
    <location>
        <begin position="119"/>
        <end position="137"/>
    </location>
</feature>
<feature type="transmembrane region" description="Helical; Name=4" evidence="1">
    <location>
        <begin position="138"/>
        <end position="156"/>
    </location>
</feature>
<feature type="topological domain" description="Extracellular" evidence="1">
    <location>
        <begin position="157"/>
        <end position="193"/>
    </location>
</feature>
<feature type="transmembrane region" description="Helical; Name=5" evidence="1">
    <location>
        <begin position="194"/>
        <end position="217"/>
    </location>
</feature>
<feature type="topological domain" description="Cytoplasmic" evidence="1">
    <location>
        <begin position="218"/>
        <end position="233"/>
    </location>
</feature>
<feature type="transmembrane region" description="Helical; Name=6" evidence="1">
    <location>
        <begin position="234"/>
        <end position="256"/>
    </location>
</feature>
<feature type="topological domain" description="Extracellular" evidence="1">
    <location>
        <begin position="257"/>
        <end position="267"/>
    </location>
</feature>
<feature type="transmembrane region" description="Helical; Name=7" evidence="1">
    <location>
        <begin position="268"/>
        <end position="287"/>
    </location>
</feature>
<feature type="topological domain" description="Cytoplasmic" evidence="1">
    <location>
        <begin position="288"/>
        <end position="310"/>
    </location>
</feature>
<feature type="glycosylation site" description="N-linked (GlcNAc...) asparagine" evidence="1">
    <location>
        <position position="4"/>
    </location>
</feature>
<feature type="disulfide bond" evidence="2">
    <location>
        <begin position="95"/>
        <end position="187"/>
    </location>
</feature>
<feature type="sequence variant" id="VAR_057543" description="In dbSNP:rs491160." evidence="4">
    <original>P</original>
    <variation>T</variation>
    <location>
        <position position="8"/>
    </location>
</feature>
<feature type="sequence variant" id="VAR_057544" description="In dbSNP:rs11230346." evidence="3">
    <original>L</original>
    <variation>I</variation>
    <location>
        <position position="15"/>
    </location>
</feature>
<feature type="sequence variant" id="VAR_057545" description="In dbSNP:rs2456022." evidence="4">
    <original>T</original>
    <variation>P</variation>
    <location>
        <position position="277"/>
    </location>
</feature>
<sequence length="310" mass="35003">MQQNNSVPEFILLGLTQDPLRQKIVFVIFLIFYMGTVVGNMLIIVTIKSSRTLGSPMYFFLFYLSFADSCFSTSTAPRLIVDALSEKKIITYNECMTQVFALHLFGCMEIFVLILMAVDRYVAICKPLRYPTIMSQQVCIILIVLAWIGSLIHSTAQIILALRLPFCGPYLIDHYCCDLQPLLKLACMDTYMINLLLVSNSGAICSSSFMILIISYIVILHSLRNHSAKGKKKALSACTSHIIVVILFFGPCIFIYTRPPTTFPMDKMVAVFYTIGTPFLNPLIYTLRNAEVKNAMRKLWHGKIISENKG</sequence>
<proteinExistence type="evidence at transcript level"/>
<name>OR4CB_HUMAN</name>
<organism>
    <name type="scientific">Homo sapiens</name>
    <name type="common">Human</name>
    <dbReference type="NCBI Taxonomy" id="9606"/>
    <lineage>
        <taxon>Eukaryota</taxon>
        <taxon>Metazoa</taxon>
        <taxon>Chordata</taxon>
        <taxon>Craniata</taxon>
        <taxon>Vertebrata</taxon>
        <taxon>Euteleostomi</taxon>
        <taxon>Mammalia</taxon>
        <taxon>Eutheria</taxon>
        <taxon>Euarchontoglires</taxon>
        <taxon>Primates</taxon>
        <taxon>Haplorrhini</taxon>
        <taxon>Catarrhini</taxon>
        <taxon>Hominidae</taxon>
        <taxon>Homo</taxon>
    </lineage>
</organism>
<reference key="1">
    <citation type="submission" date="2001-07" db="EMBL/GenBank/DDBJ databases">
        <title>Genome-wide discovery and analysis of human seven transmembrane helix receptor genes.</title>
        <authorList>
            <person name="Suwa M."/>
            <person name="Sato T."/>
            <person name="Okouchi I."/>
            <person name="Arita M."/>
            <person name="Futami K."/>
            <person name="Matsumoto S."/>
            <person name="Tsutsumi S."/>
            <person name="Aburatani H."/>
            <person name="Asai K."/>
            <person name="Akiyama Y."/>
        </authorList>
    </citation>
    <scope>NUCLEOTIDE SEQUENCE [GENOMIC DNA]</scope>
    <scope>VARIANTS THR-8 AND PRO-277</scope>
</reference>
<reference key="2">
    <citation type="journal article" date="2004" name="Genome Res.">
        <title>The status, quality, and expansion of the NIH full-length cDNA project: the Mammalian Gene Collection (MGC).</title>
        <authorList>
            <consortium name="The MGC Project Team"/>
        </authorList>
    </citation>
    <scope>NUCLEOTIDE SEQUENCE [LARGE SCALE MRNA]</scope>
    <scope>VARIANT ILE-15</scope>
</reference>
<reference key="3">
    <citation type="journal article" date="2004" name="Proc. Natl. Acad. Sci. U.S.A.">
        <title>The human olfactory receptor gene family.</title>
        <authorList>
            <person name="Malnic B."/>
            <person name="Godfrey P.A."/>
            <person name="Buck L.B."/>
        </authorList>
    </citation>
    <scope>IDENTIFICATION</scope>
</reference>
<reference key="4">
    <citation type="journal article" date="2004" name="Proc. Natl. Acad. Sci. U.S.A.">
        <authorList>
            <person name="Malnic B."/>
            <person name="Godfrey P.A."/>
            <person name="Buck L.B."/>
        </authorList>
    </citation>
    <scope>ERRATUM OF PUBMED:14983052</scope>
</reference>
<protein>
    <recommendedName>
        <fullName>Olfactory receptor 4C11</fullName>
    </recommendedName>
    <alternativeName>
        <fullName>Olfactory receptor OR11-136</fullName>
    </alternativeName>
</protein>
<comment type="function">
    <text evidence="5">Odorant receptor.</text>
</comment>
<comment type="subcellular location">
    <subcellularLocation>
        <location>Cell membrane</location>
        <topology>Multi-pass membrane protein</topology>
    </subcellularLocation>
</comment>
<comment type="similarity">
    <text evidence="2">Belongs to the G-protein coupled receptor 1 family.</text>
</comment>
<comment type="online information" name="Human Olfactory Receptor Data Exploratorium (HORDE)">
    <link uri="http://genome.weizmann.ac.il/horde/card/index/symbol:OR4C11"/>
</comment>
<accession>Q6IEV9</accession>
<accession>B9EIL4</accession>
<accession>Q8NGL8</accession>
<gene>
    <name type="primary">OR4C11</name>
    <name type="synonym">OR4C11P</name>
</gene>
<evidence type="ECO:0000255" key="1"/>
<evidence type="ECO:0000255" key="2">
    <source>
        <dbReference type="PROSITE-ProRule" id="PRU00521"/>
    </source>
</evidence>
<evidence type="ECO:0000269" key="3">
    <source>
    </source>
</evidence>
<evidence type="ECO:0000269" key="4">
    <source ref="1"/>
</evidence>
<evidence type="ECO:0000305" key="5"/>